<proteinExistence type="inferred from homology"/>
<accession>A7FM52</accession>
<feature type="chain" id="PRO_1000061239" description="GMP reductase">
    <location>
        <begin position="1"/>
        <end position="347"/>
    </location>
</feature>
<feature type="active site" description="Thioimidate intermediate" evidence="1">
    <location>
        <position position="186"/>
    </location>
</feature>
<feature type="binding site" evidence="1">
    <location>
        <begin position="108"/>
        <end position="131"/>
    </location>
    <ligand>
        <name>NADP(+)</name>
        <dbReference type="ChEBI" id="CHEBI:58349"/>
    </ligand>
</feature>
<feature type="binding site" evidence="1">
    <location>
        <position position="181"/>
    </location>
    <ligand>
        <name>K(+)</name>
        <dbReference type="ChEBI" id="CHEBI:29103"/>
    </ligand>
</feature>
<feature type="binding site" evidence="1">
    <location>
        <position position="183"/>
    </location>
    <ligand>
        <name>K(+)</name>
        <dbReference type="ChEBI" id="CHEBI:29103"/>
    </ligand>
</feature>
<feature type="binding site" evidence="1">
    <location>
        <begin position="216"/>
        <end position="239"/>
    </location>
    <ligand>
        <name>NADP(+)</name>
        <dbReference type="ChEBI" id="CHEBI:58349"/>
    </ligand>
</feature>
<organism>
    <name type="scientific">Yersinia pseudotuberculosis serotype O:1b (strain IP 31758)</name>
    <dbReference type="NCBI Taxonomy" id="349747"/>
    <lineage>
        <taxon>Bacteria</taxon>
        <taxon>Pseudomonadati</taxon>
        <taxon>Pseudomonadota</taxon>
        <taxon>Gammaproteobacteria</taxon>
        <taxon>Enterobacterales</taxon>
        <taxon>Yersiniaceae</taxon>
        <taxon>Yersinia</taxon>
    </lineage>
</organism>
<name>GUAC_YERP3</name>
<dbReference type="EC" id="1.7.1.7" evidence="1"/>
<dbReference type="EMBL" id="CP000720">
    <property type="protein sequence ID" value="ABS46719.1"/>
    <property type="molecule type" value="Genomic_DNA"/>
</dbReference>
<dbReference type="RefSeq" id="WP_002209320.1">
    <property type="nucleotide sequence ID" value="NC_009708.1"/>
</dbReference>
<dbReference type="SMR" id="A7FM52"/>
<dbReference type="KEGG" id="ypi:YpsIP31758_3373"/>
<dbReference type="HOGENOM" id="CLU_022552_5_3_6"/>
<dbReference type="Proteomes" id="UP000002412">
    <property type="component" value="Chromosome"/>
</dbReference>
<dbReference type="GO" id="GO:0005829">
    <property type="term" value="C:cytosol"/>
    <property type="evidence" value="ECO:0007669"/>
    <property type="project" value="TreeGrafter"/>
</dbReference>
<dbReference type="GO" id="GO:1902560">
    <property type="term" value="C:GMP reductase complex"/>
    <property type="evidence" value="ECO:0007669"/>
    <property type="project" value="InterPro"/>
</dbReference>
<dbReference type="GO" id="GO:0003920">
    <property type="term" value="F:GMP reductase activity"/>
    <property type="evidence" value="ECO:0007669"/>
    <property type="project" value="UniProtKB-UniRule"/>
</dbReference>
<dbReference type="GO" id="GO:0046872">
    <property type="term" value="F:metal ion binding"/>
    <property type="evidence" value="ECO:0007669"/>
    <property type="project" value="UniProtKB-KW"/>
</dbReference>
<dbReference type="GO" id="GO:0006163">
    <property type="term" value="P:purine nucleotide metabolic process"/>
    <property type="evidence" value="ECO:0007669"/>
    <property type="project" value="UniProtKB-UniRule"/>
</dbReference>
<dbReference type="CDD" id="cd00381">
    <property type="entry name" value="IMPDH"/>
    <property type="match status" value="1"/>
</dbReference>
<dbReference type="FunFam" id="3.20.20.70:FF:000012">
    <property type="entry name" value="GMP reductase"/>
    <property type="match status" value="1"/>
</dbReference>
<dbReference type="Gene3D" id="3.20.20.70">
    <property type="entry name" value="Aldolase class I"/>
    <property type="match status" value="1"/>
</dbReference>
<dbReference type="HAMAP" id="MF_00596">
    <property type="entry name" value="GMP_reduct_type1"/>
    <property type="match status" value="1"/>
</dbReference>
<dbReference type="InterPro" id="IPR013785">
    <property type="entry name" value="Aldolase_TIM"/>
</dbReference>
<dbReference type="InterPro" id="IPR050139">
    <property type="entry name" value="GMP_reductase"/>
</dbReference>
<dbReference type="InterPro" id="IPR005993">
    <property type="entry name" value="GMPR"/>
</dbReference>
<dbReference type="InterPro" id="IPR015875">
    <property type="entry name" value="IMP_DH/GMP_Rdtase_CS"/>
</dbReference>
<dbReference type="InterPro" id="IPR001093">
    <property type="entry name" value="IMP_DH_GMPRt"/>
</dbReference>
<dbReference type="NCBIfam" id="TIGR01305">
    <property type="entry name" value="GMP_reduct_1"/>
    <property type="match status" value="1"/>
</dbReference>
<dbReference type="NCBIfam" id="NF003470">
    <property type="entry name" value="PRK05096.1"/>
    <property type="match status" value="1"/>
</dbReference>
<dbReference type="PANTHER" id="PTHR43170">
    <property type="entry name" value="GMP REDUCTASE"/>
    <property type="match status" value="1"/>
</dbReference>
<dbReference type="PANTHER" id="PTHR43170:SF5">
    <property type="entry name" value="GMP REDUCTASE"/>
    <property type="match status" value="1"/>
</dbReference>
<dbReference type="Pfam" id="PF00478">
    <property type="entry name" value="IMPDH"/>
    <property type="match status" value="1"/>
</dbReference>
<dbReference type="PIRSF" id="PIRSF000235">
    <property type="entry name" value="GMP_reductase"/>
    <property type="match status" value="1"/>
</dbReference>
<dbReference type="SMART" id="SM01240">
    <property type="entry name" value="IMPDH"/>
    <property type="match status" value="1"/>
</dbReference>
<dbReference type="SUPFAM" id="SSF51412">
    <property type="entry name" value="Inosine monophosphate dehydrogenase (IMPDH)"/>
    <property type="match status" value="1"/>
</dbReference>
<dbReference type="PROSITE" id="PS00487">
    <property type="entry name" value="IMP_DH_GMP_RED"/>
    <property type="match status" value="1"/>
</dbReference>
<evidence type="ECO:0000255" key="1">
    <source>
        <dbReference type="HAMAP-Rule" id="MF_00596"/>
    </source>
</evidence>
<gene>
    <name evidence="1" type="primary">guaC</name>
    <name type="ordered locus">YpsIP31758_3373</name>
</gene>
<sequence length="347" mass="37492">MRIEEGLKLGFKDVLIRPKRSTLKSRSEVALERQFTFKHSGWNWSGVPIIAANMDTVGTFRMAEVLASFDILTAVHKHYTLEQWAEFVKRSPESVLRHVMVSTGTSSADFDKMKQILALSPSLKFICIDVANGYSEHFVSFLQRAREACPDKVICAGNVVTGEMVEELILSGADIVKVGIGPGSVCTTRVKTGVGYPQLSAVIECADAAHGLGGQIVSDGGCSVPGDVAKAFGGGADFVMLGGMLAGHDECEGRVVEENGEKFMLFYGMSSESAMKRHVGGVAQYRAAEGKTVKLPLRGSVDNTVRDIMGGLRSACTYVGASHLKELTKRTTFIRVAEQENRVFGTD</sequence>
<keyword id="KW-0479">Metal-binding</keyword>
<keyword id="KW-0521">NADP</keyword>
<keyword id="KW-0560">Oxidoreductase</keyword>
<keyword id="KW-0630">Potassium</keyword>
<protein>
    <recommendedName>
        <fullName evidence="1">GMP reductase</fullName>
        <ecNumber evidence="1">1.7.1.7</ecNumber>
    </recommendedName>
    <alternativeName>
        <fullName evidence="1">Guanosine 5'-monophosphate oxidoreductase</fullName>
        <shortName evidence="1">Guanosine monophosphate reductase</shortName>
    </alternativeName>
</protein>
<reference key="1">
    <citation type="journal article" date="2007" name="PLoS Genet.">
        <title>The complete genome sequence of Yersinia pseudotuberculosis IP31758, the causative agent of Far East scarlet-like fever.</title>
        <authorList>
            <person name="Eppinger M."/>
            <person name="Rosovitz M.J."/>
            <person name="Fricke W.F."/>
            <person name="Rasko D.A."/>
            <person name="Kokorina G."/>
            <person name="Fayolle C."/>
            <person name="Lindler L.E."/>
            <person name="Carniel E."/>
            <person name="Ravel J."/>
        </authorList>
    </citation>
    <scope>NUCLEOTIDE SEQUENCE [LARGE SCALE GENOMIC DNA]</scope>
    <source>
        <strain>IP 31758</strain>
    </source>
</reference>
<comment type="function">
    <text evidence="1">Catalyzes the irreversible NADPH-dependent deamination of GMP to IMP. It functions in the conversion of nucleobase, nucleoside and nucleotide derivatives of G to A nucleotides, and in maintaining the intracellular balance of A and G nucleotides.</text>
</comment>
<comment type="catalytic activity">
    <reaction evidence="1">
        <text>IMP + NH4(+) + NADP(+) = GMP + NADPH + 2 H(+)</text>
        <dbReference type="Rhea" id="RHEA:17185"/>
        <dbReference type="ChEBI" id="CHEBI:15378"/>
        <dbReference type="ChEBI" id="CHEBI:28938"/>
        <dbReference type="ChEBI" id="CHEBI:57783"/>
        <dbReference type="ChEBI" id="CHEBI:58053"/>
        <dbReference type="ChEBI" id="CHEBI:58115"/>
        <dbReference type="ChEBI" id="CHEBI:58349"/>
        <dbReference type="EC" id="1.7.1.7"/>
    </reaction>
</comment>
<comment type="subunit">
    <text evidence="1">Homotetramer.</text>
</comment>
<comment type="similarity">
    <text evidence="1">Belongs to the IMPDH/GMPR family. GuaC type 1 subfamily.</text>
</comment>